<organism>
    <name type="scientific">Zea mays</name>
    <name type="common">Maize</name>
    <dbReference type="NCBI Taxonomy" id="4577"/>
    <lineage>
        <taxon>Eukaryota</taxon>
        <taxon>Viridiplantae</taxon>
        <taxon>Streptophyta</taxon>
        <taxon>Embryophyta</taxon>
        <taxon>Tracheophyta</taxon>
        <taxon>Spermatophyta</taxon>
        <taxon>Magnoliopsida</taxon>
        <taxon>Liliopsida</taxon>
        <taxon>Poales</taxon>
        <taxon>Poaceae</taxon>
        <taxon>PACMAD clade</taxon>
        <taxon>Panicoideae</taxon>
        <taxon>Andropogonodae</taxon>
        <taxon>Andropogoneae</taxon>
        <taxon>Tripsacinae</taxon>
        <taxon>Zea</taxon>
    </lineage>
</organism>
<keyword id="KW-0025">Alternative splicing</keyword>
<keyword id="KW-0150">Chloroplast</keyword>
<keyword id="KW-0249">Electron transport</keyword>
<keyword id="KW-0472">Membrane</keyword>
<keyword id="KW-0602">Photosynthesis</keyword>
<keyword id="KW-0934">Plastid</keyword>
<keyword id="KW-1185">Reference proteome</keyword>
<keyword id="KW-0793">Thylakoid</keyword>
<keyword id="KW-0812">Transmembrane</keyword>
<keyword id="KW-1133">Transmembrane helix</keyword>
<keyword id="KW-0813">Transport</keyword>
<proteinExistence type="evidence at transcript level"/>
<gene>
    <name evidence="2" type="primary">petD</name>
</gene>
<accession>P05643</accession>
<accession>Q33299</accession>
<comment type="function">
    <text evidence="2">Component of the cytochrome b6-f complex, which mediates electron transfer between photosystem II (PSII) and photosystem I (PSI), cyclic electron flow around PSI, and state transitions.</text>
</comment>
<comment type="subunit">
    <text evidence="1">The 4 large subunits of the cytochrome b6-f complex are cytochrome b6, subunit IV (17 kDa polypeptide, petD), cytochrome f and the Rieske protein, while the 4 small subunits are petG, petL, petM and petN. The complex functions as a dimer (By similarity).</text>
</comment>
<comment type="subcellular location">
    <subcellularLocation>
        <location evidence="2">Plastid</location>
        <location evidence="2">Chloroplast thylakoid membrane</location>
        <topology evidence="2">Multi-pass membrane protein</topology>
    </subcellularLocation>
</comment>
<comment type="alternative products">
    <event type="alternative splicing"/>
    <isoform>
        <id>P05643-1</id>
        <name>Short</name>
        <sequence type="displayed"/>
    </isoform>
    <isoform>
        <id>P05643-2</id>
        <name>Long</name>
        <sequence type="described" ref="VSP_019383"/>
    </isoform>
</comment>
<comment type="miscellaneous">
    <text>A longer mRNA that is not produced by splicing has been shown to be transcribed in barley and maize. It is not known if this mRNA is translated.</text>
</comment>
<comment type="similarity">
    <text evidence="2">Belongs to the cytochrome b family. PetD subfamily.</text>
</comment>
<sequence>MGVTKKPDLNDPVLRAKLAKGMGHNYYGEPAWPNDLLYIFPVVILGTIACNVGLAVLEPSMIGEPADPFATPLEILPEWYFFPVFQILRTVPNKLLGVLLMVSVPTGLLTVPFLENVNKFQNPFRRPVATTVFLIGTAVALWLGIGATLPIDKSLTLGLF</sequence>
<protein>
    <recommendedName>
        <fullName evidence="2">Cytochrome b6-f complex subunit 4</fullName>
    </recommendedName>
    <alternativeName>
        <fullName evidence="2">17 kDa polypeptide</fullName>
    </alternativeName>
</protein>
<name>PETD_MAIZE</name>
<evidence type="ECO:0000250" key="1"/>
<evidence type="ECO:0000255" key="2">
    <source>
        <dbReference type="HAMAP-Rule" id="MF_01344"/>
    </source>
</evidence>
<evidence type="ECO:0000305" key="3"/>
<reference key="1">
    <citation type="journal article" date="1993" name="Plant J.">
        <title>RNA editing in maize chloroplasts is a processing step independent of splicing and cleavage to monocistronic mRNAs.</title>
        <authorList>
            <person name="Freyer R."/>
            <person name="Hoch B."/>
            <person name="Neckermann K."/>
            <person name="Maier R.M."/>
            <person name="Koessel H."/>
        </authorList>
    </citation>
    <scope>NUCLEOTIDE SEQUENCE [GENOMIC DNA]</scope>
    <scope>ABSENCE OF RNA EDITING</scope>
    <source>
        <tissue>Seedling</tissue>
    </source>
</reference>
<reference key="2">
    <citation type="journal article" date="1995" name="J. Mol. Biol.">
        <title>Complete sequence of the maize chloroplast genome: gene content, hotspots of divergence and fine tuning of genetic information by transcript editing.</title>
        <authorList>
            <person name="Maier R.M."/>
            <person name="Neckermann K."/>
            <person name="Igloi G.L."/>
            <person name="Koessel H."/>
        </authorList>
    </citation>
    <scope>NUCLEOTIDE SEQUENCE [LARGE SCALE GENOMIC DNA]</scope>
    <scope>ABSENCE OF RNA EDITING</scope>
    <source>
        <strain>cv. B73</strain>
    </source>
</reference>
<reference key="3">
    <citation type="journal article" date="1987" name="Curr. Genet.">
        <title>The maize plastid psbB-psbF-petB-petD gene cluster: spliced and unspliced petB and petD RNAs encode alternative products.</title>
        <authorList>
            <person name="Rock C.D."/>
            <person name="Barkan A."/>
            <person name="Taylor W.C."/>
        </authorList>
    </citation>
    <scope>NUCLEOTIDE SEQUENCE [LARGE SCALE GENOMIC DNA] OF 1-67 (ISOFORMS LONG AND SHORT)</scope>
    <source>
        <strain>cv. B73</strain>
    </source>
</reference>
<feature type="chain" id="PRO_0000061867" description="Cytochrome b6-f complex subunit 4">
    <location>
        <begin position="1"/>
        <end position="160"/>
    </location>
</feature>
<feature type="transmembrane region" description="Helical" evidence="2">
    <location>
        <begin position="36"/>
        <end position="56"/>
    </location>
</feature>
<feature type="transmembrane region" description="Helical" evidence="2">
    <location>
        <begin position="95"/>
        <end position="115"/>
    </location>
</feature>
<feature type="transmembrane region" description="Helical" evidence="2">
    <location>
        <begin position="131"/>
        <end position="151"/>
    </location>
</feature>
<feature type="splice variant" id="VSP_019383" description="In isoform Long." evidence="3">
    <original>MGV</original>
    <variation>MSGSFGGWILKNSPIPI</variation>
    <location>
        <begin position="1"/>
        <end position="3"/>
    </location>
</feature>
<geneLocation type="chloroplast"/>
<dbReference type="EMBL" id="S67284">
    <property type="protein sequence ID" value="AAB29195.2"/>
    <property type="molecule type" value="Genomic_DNA"/>
</dbReference>
<dbReference type="EMBL" id="S67283">
    <property type="protein sequence ID" value="AAB29195.2"/>
    <property type="status" value="JOINED"/>
    <property type="molecule type" value="Genomic_DNA"/>
</dbReference>
<dbReference type="EMBL" id="X86563">
    <property type="protein sequence ID" value="CAA60316.1"/>
    <property type="molecule type" value="Genomic_DNA"/>
</dbReference>
<dbReference type="EMBL" id="X05422">
    <property type="protein sequence ID" value="CAA29001.1"/>
    <property type="molecule type" value="Genomic_DNA"/>
</dbReference>
<dbReference type="EMBL" id="X05422">
    <property type="protein sequence ID" value="CAA29002.1"/>
    <property type="status" value="ALT_SEQ"/>
    <property type="molecule type" value="Genomic_DNA"/>
</dbReference>
<dbReference type="PIR" id="S58582">
    <property type="entry name" value="S58582"/>
</dbReference>
<dbReference type="RefSeq" id="NP_043054.1">
    <molecule id="P05643-1"/>
    <property type="nucleotide sequence ID" value="NC_001666.2"/>
</dbReference>
<dbReference type="SMR" id="P05643"/>
<dbReference type="FunCoup" id="P05643">
    <property type="interactions" value="532"/>
</dbReference>
<dbReference type="STRING" id="4577.P05643"/>
<dbReference type="PaxDb" id="4577-GRMZM2G427557_P01"/>
<dbReference type="GeneID" id="845193"/>
<dbReference type="KEGG" id="zma:845193"/>
<dbReference type="MaizeGDB" id="56341"/>
<dbReference type="eggNOG" id="KOG4663">
    <property type="taxonomic scope" value="Eukaryota"/>
</dbReference>
<dbReference type="HOGENOM" id="CLU_112652_0_0_1"/>
<dbReference type="InParanoid" id="P05643"/>
<dbReference type="OMA" id="DEPNIPC"/>
<dbReference type="OrthoDB" id="726321at2759"/>
<dbReference type="Proteomes" id="UP000007305">
    <property type="component" value="Chloroplast"/>
</dbReference>
<dbReference type="GO" id="GO:0009535">
    <property type="term" value="C:chloroplast thylakoid membrane"/>
    <property type="evidence" value="ECO:0007669"/>
    <property type="project" value="UniProtKB-SubCell"/>
</dbReference>
<dbReference type="GO" id="GO:0045158">
    <property type="term" value="F:electron transporter, transferring electrons within cytochrome b6/f complex of photosystem II activity"/>
    <property type="evidence" value="ECO:0007669"/>
    <property type="project" value="UniProtKB-UniRule"/>
</dbReference>
<dbReference type="GO" id="GO:0045156">
    <property type="term" value="F:electron transporter, transferring electrons within the cyclic electron transport pathway of photosynthesis activity"/>
    <property type="evidence" value="ECO:0007669"/>
    <property type="project" value="InterPro"/>
</dbReference>
<dbReference type="GO" id="GO:0016491">
    <property type="term" value="F:oxidoreductase activity"/>
    <property type="evidence" value="ECO:0007669"/>
    <property type="project" value="InterPro"/>
</dbReference>
<dbReference type="GO" id="GO:0009767">
    <property type="term" value="P:photosynthetic electron transport chain"/>
    <property type="evidence" value="ECO:0007669"/>
    <property type="project" value="InterPro"/>
</dbReference>
<dbReference type="CDD" id="cd00290">
    <property type="entry name" value="cytochrome_b_C"/>
    <property type="match status" value="1"/>
</dbReference>
<dbReference type="FunFam" id="1.10.287.980:FF:000001">
    <property type="entry name" value="Cytochrome b6-f complex subunit 4"/>
    <property type="match status" value="1"/>
</dbReference>
<dbReference type="FunFam" id="1.20.5.510:FF:000002">
    <property type="entry name" value="Cytochrome b6-f complex subunit 4"/>
    <property type="match status" value="1"/>
</dbReference>
<dbReference type="Gene3D" id="1.10.287.980">
    <property type="entry name" value="plastocyanin oxidoreductase"/>
    <property type="match status" value="1"/>
</dbReference>
<dbReference type="Gene3D" id="1.20.5.510">
    <property type="entry name" value="Single helix bin"/>
    <property type="match status" value="1"/>
</dbReference>
<dbReference type="HAMAP" id="MF_01344">
    <property type="entry name" value="Cytb6_f_subIV"/>
    <property type="match status" value="1"/>
</dbReference>
<dbReference type="InterPro" id="IPR005798">
    <property type="entry name" value="Cyt_b/b6_C"/>
</dbReference>
<dbReference type="InterPro" id="IPR036150">
    <property type="entry name" value="Cyt_b/b6_C_sf"/>
</dbReference>
<dbReference type="InterPro" id="IPR005870">
    <property type="entry name" value="Cyt_b6/f_cplx_suIV"/>
</dbReference>
<dbReference type="InterPro" id="IPR048260">
    <property type="entry name" value="Cytochrome_b_C_euk/bac"/>
</dbReference>
<dbReference type="NCBIfam" id="TIGR01156">
    <property type="entry name" value="cytb6_f_IV"/>
    <property type="match status" value="1"/>
</dbReference>
<dbReference type="PANTHER" id="PTHR19271">
    <property type="entry name" value="CYTOCHROME B"/>
    <property type="match status" value="1"/>
</dbReference>
<dbReference type="PANTHER" id="PTHR19271:SF40">
    <property type="entry name" value="CYTOCHROME B"/>
    <property type="match status" value="1"/>
</dbReference>
<dbReference type="Pfam" id="PF00032">
    <property type="entry name" value="Cytochrom_B_C"/>
    <property type="match status" value="1"/>
</dbReference>
<dbReference type="PIRSF" id="PIRSF000033">
    <property type="entry name" value="B6f_17K"/>
    <property type="match status" value="1"/>
</dbReference>
<dbReference type="SUPFAM" id="SSF81648">
    <property type="entry name" value="a domain/subunit of cytochrome bc1 complex (Ubiquinol-cytochrome c reductase)"/>
    <property type="match status" value="1"/>
</dbReference>
<dbReference type="PROSITE" id="PS51003">
    <property type="entry name" value="CYTB_CTER"/>
    <property type="match status" value="1"/>
</dbReference>